<keyword id="KW-0413">Isomerase</keyword>
<keyword id="KW-0460">Magnesium</keyword>
<keyword id="KW-0479">Metal-binding</keyword>
<keyword id="KW-0597">Phosphoprotein</keyword>
<keyword id="KW-1185">Reference proteome</keyword>
<accession>B8DWH9</accession>
<organism>
    <name type="scientific">Bifidobacterium animalis subsp. lactis (strain AD011)</name>
    <dbReference type="NCBI Taxonomy" id="442563"/>
    <lineage>
        <taxon>Bacteria</taxon>
        <taxon>Bacillati</taxon>
        <taxon>Actinomycetota</taxon>
        <taxon>Actinomycetes</taxon>
        <taxon>Bifidobacteriales</taxon>
        <taxon>Bifidobacteriaceae</taxon>
        <taxon>Bifidobacterium</taxon>
    </lineage>
</organism>
<protein>
    <recommendedName>
        <fullName evidence="1">Phosphoglucosamine mutase</fullName>
        <ecNumber evidence="1">5.4.2.10</ecNumber>
    </recommendedName>
</protein>
<sequence>MPRMFGTDGVRGLANRDLTAQLALDLGDAAVRVLGDDGGRETNRHRALIGRDTRVSGDFLSHALAAGMSAGGFDVIDAGIIPTPGVAFLTSVLNVEMGAVISASHNPMPDNGIKFFARGGFKLPDTKEDEIEAVLGQDWERPTGAGVGRVSHDTTTATNLYIDHLVSAIAPEGNEQPLKGLKVVADCANGATSVVAPEALRRAGADVIVINASPDGYNINKNAGSTHPESMQAMVRASGADLGVAFDGDADRCLAADAEGNMVNGDQIMGILARAKKREGKLNHDTLVVTVMSNLGLKLALKEMGIDTVQTNVGDRYVLEEMLRGDYSLGGEQSGHVINREFATTGDGTLTALTLCNEVVKSGKSLKELAADFPQLPQQLINVPNVDKMAAKTNKAVLEAVAREEELLGDTGRVLLRPSGTEPLVRVMAEAATQEQADEVTARLAQIVADELAL</sequence>
<reference key="1">
    <citation type="journal article" date="2009" name="J. Bacteriol.">
        <title>Genome sequence of the probiotic bacterium Bifidobacterium animalis subsp. lactis AD011.</title>
        <authorList>
            <person name="Kim J.F."/>
            <person name="Jeong H."/>
            <person name="Yu D.S."/>
            <person name="Choi S.-H."/>
            <person name="Hur C.-G."/>
            <person name="Park M.-S."/>
            <person name="Yoon S.H."/>
            <person name="Kim D.-W."/>
            <person name="Ji G.E."/>
            <person name="Park H.-S."/>
            <person name="Oh T.K."/>
        </authorList>
    </citation>
    <scope>NUCLEOTIDE SEQUENCE [LARGE SCALE GENOMIC DNA]</scope>
    <source>
        <strain>AD011</strain>
    </source>
</reference>
<dbReference type="EC" id="5.4.2.10" evidence="1"/>
<dbReference type="EMBL" id="CP001213">
    <property type="protein sequence ID" value="ACL28830.1"/>
    <property type="molecule type" value="Genomic_DNA"/>
</dbReference>
<dbReference type="RefSeq" id="WP_004269221.1">
    <property type="nucleotide sequence ID" value="NC_011835.1"/>
</dbReference>
<dbReference type="SMR" id="B8DWH9"/>
<dbReference type="STRING" id="442563.BLA_0531"/>
<dbReference type="GeneID" id="29696120"/>
<dbReference type="KEGG" id="bla:BLA_0531"/>
<dbReference type="PATRIC" id="fig|442563.4.peg.559"/>
<dbReference type="HOGENOM" id="CLU_016950_7_0_11"/>
<dbReference type="Proteomes" id="UP000002456">
    <property type="component" value="Chromosome"/>
</dbReference>
<dbReference type="GO" id="GO:0005829">
    <property type="term" value="C:cytosol"/>
    <property type="evidence" value="ECO:0007669"/>
    <property type="project" value="TreeGrafter"/>
</dbReference>
<dbReference type="GO" id="GO:0000287">
    <property type="term" value="F:magnesium ion binding"/>
    <property type="evidence" value="ECO:0007669"/>
    <property type="project" value="UniProtKB-UniRule"/>
</dbReference>
<dbReference type="GO" id="GO:0008966">
    <property type="term" value="F:phosphoglucosamine mutase activity"/>
    <property type="evidence" value="ECO:0007669"/>
    <property type="project" value="UniProtKB-UniRule"/>
</dbReference>
<dbReference type="GO" id="GO:0004615">
    <property type="term" value="F:phosphomannomutase activity"/>
    <property type="evidence" value="ECO:0007669"/>
    <property type="project" value="TreeGrafter"/>
</dbReference>
<dbReference type="GO" id="GO:0005975">
    <property type="term" value="P:carbohydrate metabolic process"/>
    <property type="evidence" value="ECO:0007669"/>
    <property type="project" value="InterPro"/>
</dbReference>
<dbReference type="GO" id="GO:0009252">
    <property type="term" value="P:peptidoglycan biosynthetic process"/>
    <property type="evidence" value="ECO:0007669"/>
    <property type="project" value="TreeGrafter"/>
</dbReference>
<dbReference type="GO" id="GO:0006048">
    <property type="term" value="P:UDP-N-acetylglucosamine biosynthetic process"/>
    <property type="evidence" value="ECO:0007669"/>
    <property type="project" value="TreeGrafter"/>
</dbReference>
<dbReference type="CDD" id="cd05802">
    <property type="entry name" value="GlmM"/>
    <property type="match status" value="1"/>
</dbReference>
<dbReference type="FunFam" id="3.30.310.50:FF:000001">
    <property type="entry name" value="Phosphoglucosamine mutase"/>
    <property type="match status" value="1"/>
</dbReference>
<dbReference type="FunFam" id="3.40.120.10:FF:000001">
    <property type="entry name" value="Phosphoglucosamine mutase"/>
    <property type="match status" value="1"/>
</dbReference>
<dbReference type="FunFam" id="3.40.120.10:FF:000002">
    <property type="entry name" value="Phosphoglucosamine mutase"/>
    <property type="match status" value="1"/>
</dbReference>
<dbReference type="Gene3D" id="3.40.120.10">
    <property type="entry name" value="Alpha-D-Glucose-1,6-Bisphosphate, subunit A, domain 3"/>
    <property type="match status" value="3"/>
</dbReference>
<dbReference type="Gene3D" id="3.30.310.50">
    <property type="entry name" value="Alpha-D-phosphohexomutase, C-terminal domain"/>
    <property type="match status" value="1"/>
</dbReference>
<dbReference type="HAMAP" id="MF_01554_B">
    <property type="entry name" value="GlmM_B"/>
    <property type="match status" value="1"/>
</dbReference>
<dbReference type="InterPro" id="IPR005844">
    <property type="entry name" value="A-D-PHexomutase_a/b/a-I"/>
</dbReference>
<dbReference type="InterPro" id="IPR016055">
    <property type="entry name" value="A-D-PHexomutase_a/b/a-I/II/III"/>
</dbReference>
<dbReference type="InterPro" id="IPR005845">
    <property type="entry name" value="A-D-PHexomutase_a/b/a-II"/>
</dbReference>
<dbReference type="InterPro" id="IPR005846">
    <property type="entry name" value="A-D-PHexomutase_a/b/a-III"/>
</dbReference>
<dbReference type="InterPro" id="IPR005843">
    <property type="entry name" value="A-D-PHexomutase_C"/>
</dbReference>
<dbReference type="InterPro" id="IPR036900">
    <property type="entry name" value="A-D-PHexomutase_C_sf"/>
</dbReference>
<dbReference type="InterPro" id="IPR005841">
    <property type="entry name" value="Alpha-D-phosphohexomutase_SF"/>
</dbReference>
<dbReference type="InterPro" id="IPR006352">
    <property type="entry name" value="GlmM_bact"/>
</dbReference>
<dbReference type="InterPro" id="IPR050060">
    <property type="entry name" value="Phosphoglucosamine_mutase"/>
</dbReference>
<dbReference type="NCBIfam" id="TIGR01455">
    <property type="entry name" value="glmM"/>
    <property type="match status" value="1"/>
</dbReference>
<dbReference type="PANTHER" id="PTHR42946:SF1">
    <property type="entry name" value="PHOSPHOGLUCOMUTASE (ALPHA-D-GLUCOSE-1,6-BISPHOSPHATE-DEPENDENT)"/>
    <property type="match status" value="1"/>
</dbReference>
<dbReference type="PANTHER" id="PTHR42946">
    <property type="entry name" value="PHOSPHOHEXOSE MUTASE"/>
    <property type="match status" value="1"/>
</dbReference>
<dbReference type="Pfam" id="PF02878">
    <property type="entry name" value="PGM_PMM_I"/>
    <property type="match status" value="1"/>
</dbReference>
<dbReference type="Pfam" id="PF02879">
    <property type="entry name" value="PGM_PMM_II"/>
    <property type="match status" value="1"/>
</dbReference>
<dbReference type="Pfam" id="PF02880">
    <property type="entry name" value="PGM_PMM_III"/>
    <property type="match status" value="1"/>
</dbReference>
<dbReference type="Pfam" id="PF00408">
    <property type="entry name" value="PGM_PMM_IV"/>
    <property type="match status" value="1"/>
</dbReference>
<dbReference type="PRINTS" id="PR00509">
    <property type="entry name" value="PGMPMM"/>
</dbReference>
<dbReference type="SUPFAM" id="SSF55957">
    <property type="entry name" value="Phosphoglucomutase, C-terminal domain"/>
    <property type="match status" value="1"/>
</dbReference>
<dbReference type="SUPFAM" id="SSF53738">
    <property type="entry name" value="Phosphoglucomutase, first 3 domains"/>
    <property type="match status" value="3"/>
</dbReference>
<comment type="function">
    <text evidence="1">Catalyzes the conversion of glucosamine-6-phosphate to glucosamine-1-phosphate.</text>
</comment>
<comment type="catalytic activity">
    <reaction evidence="1">
        <text>alpha-D-glucosamine 1-phosphate = D-glucosamine 6-phosphate</text>
        <dbReference type="Rhea" id="RHEA:23424"/>
        <dbReference type="ChEBI" id="CHEBI:58516"/>
        <dbReference type="ChEBI" id="CHEBI:58725"/>
        <dbReference type="EC" id="5.4.2.10"/>
    </reaction>
</comment>
<comment type="cofactor">
    <cofactor evidence="1">
        <name>Mg(2+)</name>
        <dbReference type="ChEBI" id="CHEBI:18420"/>
    </cofactor>
    <text evidence="1">Binds 1 Mg(2+) ion per subunit.</text>
</comment>
<comment type="PTM">
    <text evidence="1">Activated by phosphorylation.</text>
</comment>
<comment type="similarity">
    <text evidence="1">Belongs to the phosphohexose mutase family.</text>
</comment>
<evidence type="ECO:0000255" key="1">
    <source>
        <dbReference type="HAMAP-Rule" id="MF_01554"/>
    </source>
</evidence>
<feature type="chain" id="PRO_1000185352" description="Phosphoglucosamine mutase">
    <location>
        <begin position="1"/>
        <end position="454"/>
    </location>
</feature>
<feature type="active site" description="Phosphoserine intermediate" evidence="1">
    <location>
        <position position="104"/>
    </location>
</feature>
<feature type="binding site" description="via phosphate group" evidence="1">
    <location>
        <position position="104"/>
    </location>
    <ligand>
        <name>Mg(2+)</name>
        <dbReference type="ChEBI" id="CHEBI:18420"/>
    </ligand>
</feature>
<feature type="binding site" evidence="1">
    <location>
        <position position="247"/>
    </location>
    <ligand>
        <name>Mg(2+)</name>
        <dbReference type="ChEBI" id="CHEBI:18420"/>
    </ligand>
</feature>
<feature type="binding site" evidence="1">
    <location>
        <position position="249"/>
    </location>
    <ligand>
        <name>Mg(2+)</name>
        <dbReference type="ChEBI" id="CHEBI:18420"/>
    </ligand>
</feature>
<feature type="binding site" evidence="1">
    <location>
        <position position="251"/>
    </location>
    <ligand>
        <name>Mg(2+)</name>
        <dbReference type="ChEBI" id="CHEBI:18420"/>
    </ligand>
</feature>
<feature type="modified residue" description="Phosphoserine" evidence="1">
    <location>
        <position position="104"/>
    </location>
</feature>
<name>GLMM_BIFA0</name>
<gene>
    <name evidence="1" type="primary">glmM</name>
    <name type="ordered locus">BLA_0531</name>
</gene>
<proteinExistence type="inferred from homology"/>